<reference key="1">
    <citation type="journal article" date="2015" name="Genome Announc.">
        <title>Draft genome sequence of the cellulolytic fungus Chaetomium globosum.</title>
        <authorList>
            <person name="Cuomo C.A."/>
            <person name="Untereiner W.A."/>
            <person name="Ma L.-J."/>
            <person name="Grabherr M."/>
            <person name="Birren B.W."/>
        </authorList>
    </citation>
    <scope>NUCLEOTIDE SEQUENCE [LARGE SCALE GENOMIC DNA]</scope>
    <source>
        <strain>ATCC 6205 / CBS 148.51 / DSM 1962 / NBRC 6347 / NRRL 1970</strain>
    </source>
</reference>
<organism>
    <name type="scientific">Chaetomium globosum (strain ATCC 6205 / CBS 148.51 / DSM 1962 / NBRC 6347 / NRRL 1970)</name>
    <name type="common">Soil fungus</name>
    <dbReference type="NCBI Taxonomy" id="306901"/>
    <lineage>
        <taxon>Eukaryota</taxon>
        <taxon>Fungi</taxon>
        <taxon>Dikarya</taxon>
        <taxon>Ascomycota</taxon>
        <taxon>Pezizomycotina</taxon>
        <taxon>Sordariomycetes</taxon>
        <taxon>Sordariomycetidae</taxon>
        <taxon>Sordariales</taxon>
        <taxon>Chaetomiaceae</taxon>
        <taxon>Chaetomium</taxon>
    </lineage>
</organism>
<protein>
    <recommendedName>
        <fullName>Pheromone-processing carboxypeptidase KEX1</fullName>
        <ecNumber>3.4.16.6</ecNumber>
    </recommendedName>
    <alternativeName>
        <fullName>Carboxypeptidase D</fullName>
    </alternativeName>
</protein>
<evidence type="ECO:0000250" key="1"/>
<evidence type="ECO:0000255" key="2"/>
<evidence type="ECO:0000256" key="3">
    <source>
        <dbReference type="SAM" id="MobiDB-lite"/>
    </source>
</evidence>
<evidence type="ECO:0000305" key="4"/>
<comment type="function">
    <text evidence="1">Protease with a carboxypeptidase B-like function involved in the C-terminal processing of the lysine and arginine residues from protein precursors. Promotes cell fusion and is involved in the programmed cell death (By similarity).</text>
</comment>
<comment type="catalytic activity">
    <reaction>
        <text>Preferential release of a C-terminal arginine or lysine residue.</text>
        <dbReference type="EC" id="3.4.16.6"/>
    </reaction>
</comment>
<comment type="subcellular location">
    <subcellularLocation>
        <location evidence="1">Golgi apparatus</location>
        <location evidence="1">trans-Golgi network membrane</location>
        <topology evidence="1">Single-pass type I membrane protein</topology>
    </subcellularLocation>
</comment>
<comment type="similarity">
    <text evidence="4">Belongs to the peptidase S10 family.</text>
</comment>
<gene>
    <name type="primary">KEX1</name>
    <name type="ORF">CHGG_07037</name>
</gene>
<name>KEX1_CHAGB</name>
<sequence>MVPSWPSTGCWRHLPVVLAALTLPWTATLAAAEKSAGDYFVHSLPGAPEGPLVKMHAGHIEVTPETNGNLFFWHFQNKHIANKQRTVIWLNGGPGCSSEDGALMEIGPYRLKDDKTLMYNDGAWNEFANVLFVDNPVGTGFSYVDTNAYVRELDEMAEQFVIFMEKWYKLFPEYEHDDLYFAGESYAGQYIPYIAKHVLARNKEAGTKQWNLKGLLIGNGWISPPEQYEAYLQFAFEKGLVKKGSDIASKLEVQLRICQKDLAVGESAVDHPECEKILQEILKLTATRGKDNKLECYNMYDVRLKDVYPSCGMNWPSDLANVQPYLRRKDVVQALHVNPNKVTGWVECDGRVGQNFNPVKSKPSIDLLPDILSEVPVMLFSGAEDLICNHLGTEALISRMAWNGGRGFELSPGTWAPRRDWTFEGEDAGFWQEARNLTYVVFYNASHMVPYDHPRRTRDMLDRFMGVDISSIGGDPTDSRLDGEKGPETTVGGTAGNGNADQEAEKAKLSAAKWEAYRRSGEIVLVIVAVAAAAWGYFVWRERRKRRGYQGLASAENGAAGGVMGGNSGFRNTHGGRPRSDVEAGDFDETQLDSLHVRSPVEGQEDARYSLGAVSDDDDEEEEGSAAGAKGKEKETGKAAESS</sequence>
<keyword id="KW-0053">Apoptosis</keyword>
<keyword id="KW-0121">Carboxypeptidase</keyword>
<keyword id="KW-0325">Glycoprotein</keyword>
<keyword id="KW-0333">Golgi apparatus</keyword>
<keyword id="KW-0378">Hydrolase</keyword>
<keyword id="KW-0472">Membrane</keyword>
<keyword id="KW-0645">Protease</keyword>
<keyword id="KW-1185">Reference proteome</keyword>
<keyword id="KW-0732">Signal</keyword>
<keyword id="KW-0812">Transmembrane</keyword>
<keyword id="KW-1133">Transmembrane helix</keyword>
<accession>Q2GYB7</accession>
<feature type="signal peptide" evidence="2">
    <location>
        <begin position="1"/>
        <end position="30"/>
    </location>
</feature>
<feature type="chain" id="PRO_0000411912" description="Pheromone-processing carboxypeptidase KEX1">
    <location>
        <begin position="31"/>
        <end position="643"/>
    </location>
</feature>
<feature type="topological domain" description="Lumenal" evidence="2">
    <location>
        <begin position="31"/>
        <end position="519"/>
    </location>
</feature>
<feature type="transmembrane region" description="Helical" evidence="2">
    <location>
        <begin position="520"/>
        <end position="540"/>
    </location>
</feature>
<feature type="topological domain" description="Cytoplasmic" evidence="2">
    <location>
        <begin position="541"/>
        <end position="643"/>
    </location>
</feature>
<feature type="region of interest" description="Disordered" evidence="3">
    <location>
        <begin position="471"/>
        <end position="502"/>
    </location>
</feature>
<feature type="region of interest" description="Disordered" evidence="3">
    <location>
        <begin position="556"/>
        <end position="643"/>
    </location>
</feature>
<feature type="compositionally biased region" description="Basic and acidic residues" evidence="3">
    <location>
        <begin position="477"/>
        <end position="487"/>
    </location>
</feature>
<feature type="compositionally biased region" description="Low complexity" evidence="3">
    <location>
        <begin position="489"/>
        <end position="500"/>
    </location>
</feature>
<feature type="compositionally biased region" description="Gly residues" evidence="3">
    <location>
        <begin position="559"/>
        <end position="568"/>
    </location>
</feature>
<feature type="compositionally biased region" description="Acidic residues" evidence="3">
    <location>
        <begin position="615"/>
        <end position="624"/>
    </location>
</feature>
<feature type="compositionally biased region" description="Basic and acidic residues" evidence="3">
    <location>
        <begin position="630"/>
        <end position="643"/>
    </location>
</feature>
<feature type="active site" evidence="1">
    <location>
        <position position="185"/>
    </location>
</feature>
<feature type="active site" evidence="1">
    <location>
        <position position="385"/>
    </location>
</feature>
<feature type="active site" evidence="1">
    <location>
        <position position="447"/>
    </location>
</feature>
<feature type="glycosylation site" description="N-linked (GlcNAc...) asparagine" evidence="2">
    <location>
        <position position="436"/>
    </location>
</feature>
<feature type="glycosylation site" description="N-linked (GlcNAc...) asparagine" evidence="2">
    <location>
        <position position="444"/>
    </location>
</feature>
<dbReference type="EC" id="3.4.16.6"/>
<dbReference type="EMBL" id="CH408033">
    <property type="protein sequence ID" value="EAQ85784.1"/>
    <property type="molecule type" value="Genomic_DNA"/>
</dbReference>
<dbReference type="RefSeq" id="XP_001224693.1">
    <property type="nucleotide sequence ID" value="XM_001224692.1"/>
</dbReference>
<dbReference type="SMR" id="Q2GYB7"/>
<dbReference type="FunCoup" id="Q2GYB7">
    <property type="interactions" value="99"/>
</dbReference>
<dbReference type="STRING" id="306901.Q2GYB7"/>
<dbReference type="ESTHER" id="chagb-q2gyb7">
    <property type="family name" value="Carboxypeptidase_S10"/>
</dbReference>
<dbReference type="MEROPS" id="S10.007"/>
<dbReference type="GlyCosmos" id="Q2GYB7">
    <property type="glycosylation" value="2 sites, No reported glycans"/>
</dbReference>
<dbReference type="GeneID" id="4393231"/>
<dbReference type="VEuPathDB" id="FungiDB:CHGG_07037"/>
<dbReference type="eggNOG" id="KOG1282">
    <property type="taxonomic scope" value="Eukaryota"/>
</dbReference>
<dbReference type="HOGENOM" id="CLU_008523_11_0_1"/>
<dbReference type="InParanoid" id="Q2GYB7"/>
<dbReference type="OMA" id="EMADQFV"/>
<dbReference type="OrthoDB" id="443318at2759"/>
<dbReference type="Proteomes" id="UP000001056">
    <property type="component" value="Unassembled WGS sequence"/>
</dbReference>
<dbReference type="GO" id="GO:0016020">
    <property type="term" value="C:membrane"/>
    <property type="evidence" value="ECO:0007669"/>
    <property type="project" value="UniProtKB-KW"/>
</dbReference>
<dbReference type="GO" id="GO:0005802">
    <property type="term" value="C:trans-Golgi network"/>
    <property type="evidence" value="ECO:0007669"/>
    <property type="project" value="TreeGrafter"/>
</dbReference>
<dbReference type="GO" id="GO:0004185">
    <property type="term" value="F:serine-type carboxypeptidase activity"/>
    <property type="evidence" value="ECO:0007669"/>
    <property type="project" value="UniProtKB-EC"/>
</dbReference>
<dbReference type="GO" id="GO:0006915">
    <property type="term" value="P:apoptotic process"/>
    <property type="evidence" value="ECO:0007669"/>
    <property type="project" value="UniProtKB-KW"/>
</dbReference>
<dbReference type="GO" id="GO:0006508">
    <property type="term" value="P:proteolysis"/>
    <property type="evidence" value="ECO:0007669"/>
    <property type="project" value="UniProtKB-KW"/>
</dbReference>
<dbReference type="FunFam" id="3.40.50.1820:FF:000121">
    <property type="entry name" value="Carboxypeptidase D"/>
    <property type="match status" value="1"/>
</dbReference>
<dbReference type="Gene3D" id="3.40.50.1820">
    <property type="entry name" value="alpha/beta hydrolase"/>
    <property type="match status" value="1"/>
</dbReference>
<dbReference type="InterPro" id="IPR029058">
    <property type="entry name" value="AB_hydrolase_fold"/>
</dbReference>
<dbReference type="InterPro" id="IPR001563">
    <property type="entry name" value="Peptidase_S10"/>
</dbReference>
<dbReference type="PANTHER" id="PTHR11802:SF190">
    <property type="entry name" value="PHEROMONE-PROCESSING CARBOXYPEPTIDASE KEX1"/>
    <property type="match status" value="1"/>
</dbReference>
<dbReference type="PANTHER" id="PTHR11802">
    <property type="entry name" value="SERINE PROTEASE FAMILY S10 SERINE CARBOXYPEPTIDASE"/>
    <property type="match status" value="1"/>
</dbReference>
<dbReference type="Pfam" id="PF00450">
    <property type="entry name" value="Peptidase_S10"/>
    <property type="match status" value="1"/>
</dbReference>
<dbReference type="PRINTS" id="PR00724">
    <property type="entry name" value="CRBOXYPTASEC"/>
</dbReference>
<dbReference type="SUPFAM" id="SSF53474">
    <property type="entry name" value="alpha/beta-Hydrolases"/>
    <property type="match status" value="1"/>
</dbReference>
<proteinExistence type="inferred from homology"/>